<dbReference type="EC" id="2.7.7.101" evidence="1"/>
<dbReference type="EMBL" id="CP000816">
    <property type="protein sequence ID" value="ABU81245.1"/>
    <property type="molecule type" value="Genomic_DNA"/>
</dbReference>
<dbReference type="RefSeq" id="WP_011998097.1">
    <property type="nucleotide sequence ID" value="NC_009776.1"/>
</dbReference>
<dbReference type="SMR" id="A8A8J3"/>
<dbReference type="STRING" id="453591.Igni_0061"/>
<dbReference type="GeneID" id="5561902"/>
<dbReference type="KEGG" id="iho:Igni_0061"/>
<dbReference type="eggNOG" id="arCOG04281">
    <property type="taxonomic scope" value="Archaea"/>
</dbReference>
<dbReference type="HOGENOM" id="CLU_034626_0_0_2"/>
<dbReference type="OrthoDB" id="8643at2157"/>
<dbReference type="PhylomeDB" id="A8A8J3"/>
<dbReference type="Proteomes" id="UP000000262">
    <property type="component" value="Chromosome"/>
</dbReference>
<dbReference type="GO" id="GO:0005737">
    <property type="term" value="C:cytoplasm"/>
    <property type="evidence" value="ECO:0007669"/>
    <property type="project" value="TreeGrafter"/>
</dbReference>
<dbReference type="GO" id="GO:0000428">
    <property type="term" value="C:DNA-directed RNA polymerase complex"/>
    <property type="evidence" value="ECO:0007669"/>
    <property type="project" value="UniProtKB-KW"/>
</dbReference>
<dbReference type="GO" id="GO:0000178">
    <property type="term" value="C:exosome (RNase complex)"/>
    <property type="evidence" value="ECO:0007669"/>
    <property type="project" value="UniProtKB-KW"/>
</dbReference>
<dbReference type="GO" id="GO:1990077">
    <property type="term" value="C:primosome complex"/>
    <property type="evidence" value="ECO:0007669"/>
    <property type="project" value="UniProtKB-KW"/>
</dbReference>
<dbReference type="GO" id="GO:0003899">
    <property type="term" value="F:DNA-directed RNA polymerase activity"/>
    <property type="evidence" value="ECO:0007669"/>
    <property type="project" value="InterPro"/>
</dbReference>
<dbReference type="GO" id="GO:0046872">
    <property type="term" value="F:metal ion binding"/>
    <property type="evidence" value="ECO:0007669"/>
    <property type="project" value="UniProtKB-KW"/>
</dbReference>
<dbReference type="GO" id="GO:0008143">
    <property type="term" value="F:poly(A) binding"/>
    <property type="evidence" value="ECO:0007669"/>
    <property type="project" value="InterPro"/>
</dbReference>
<dbReference type="GO" id="GO:0006269">
    <property type="term" value="P:DNA replication, synthesis of primer"/>
    <property type="evidence" value="ECO:0007669"/>
    <property type="project" value="UniProtKB-UniRule"/>
</dbReference>
<dbReference type="CDD" id="cd01029">
    <property type="entry name" value="TOPRIM_primases"/>
    <property type="match status" value="1"/>
</dbReference>
<dbReference type="Gene3D" id="3.40.1360.10">
    <property type="match status" value="1"/>
</dbReference>
<dbReference type="HAMAP" id="MF_00007">
    <property type="entry name" value="DNA_primase_DnaG_arc"/>
    <property type="match status" value="1"/>
</dbReference>
<dbReference type="InterPro" id="IPR050219">
    <property type="entry name" value="DnaG_primase"/>
</dbReference>
<dbReference type="InterPro" id="IPR020607">
    <property type="entry name" value="Primase_DnaG_arc"/>
</dbReference>
<dbReference type="InterPro" id="IPR034154">
    <property type="entry name" value="TOPRIM_DnaG/twinkle"/>
</dbReference>
<dbReference type="InterPro" id="IPR006171">
    <property type="entry name" value="TOPRIM_dom"/>
</dbReference>
<dbReference type="NCBIfam" id="NF003108">
    <property type="entry name" value="PRK04031.1-1"/>
    <property type="match status" value="1"/>
</dbReference>
<dbReference type="PANTHER" id="PTHR30313">
    <property type="entry name" value="DNA PRIMASE"/>
    <property type="match status" value="1"/>
</dbReference>
<dbReference type="PANTHER" id="PTHR30313:SF2">
    <property type="entry name" value="DNA PRIMASE"/>
    <property type="match status" value="1"/>
</dbReference>
<dbReference type="Pfam" id="PF13662">
    <property type="entry name" value="Toprim_4"/>
    <property type="match status" value="1"/>
</dbReference>
<dbReference type="SMART" id="SM00493">
    <property type="entry name" value="TOPRIM"/>
    <property type="match status" value="1"/>
</dbReference>
<dbReference type="SUPFAM" id="SSF56731">
    <property type="entry name" value="DNA primase core"/>
    <property type="match status" value="1"/>
</dbReference>
<dbReference type="PROSITE" id="PS50880">
    <property type="entry name" value="TOPRIM"/>
    <property type="match status" value="1"/>
</dbReference>
<protein>
    <recommendedName>
        <fullName evidence="1">DNA primase DnaG</fullName>
        <ecNumber evidence="1">2.7.7.101</ecNumber>
    </recommendedName>
</protein>
<organism>
    <name type="scientific">Ignicoccus hospitalis (strain KIN4/I / DSM 18386 / JCM 14125)</name>
    <dbReference type="NCBI Taxonomy" id="453591"/>
    <lineage>
        <taxon>Archaea</taxon>
        <taxon>Thermoproteota</taxon>
        <taxon>Thermoprotei</taxon>
        <taxon>Desulfurococcales</taxon>
        <taxon>Desulfurococcaceae</taxon>
        <taxon>Ignicoccus</taxon>
    </lineage>
</organism>
<feature type="chain" id="PRO_0000321491" description="DNA primase DnaG">
    <location>
        <begin position="1"/>
        <end position="441"/>
    </location>
</feature>
<feature type="domain" description="Toprim" evidence="1">
    <location>
        <begin position="165"/>
        <end position="241"/>
    </location>
</feature>
<feature type="region of interest" description="Disordered" evidence="2">
    <location>
        <begin position="299"/>
        <end position="320"/>
    </location>
</feature>
<feature type="compositionally biased region" description="Basic and acidic residues" evidence="2">
    <location>
        <begin position="299"/>
        <end position="315"/>
    </location>
</feature>
<feature type="binding site" evidence="1">
    <location>
        <position position="171"/>
    </location>
    <ligand>
        <name>Mg(2+)</name>
        <dbReference type="ChEBI" id="CHEBI:18420"/>
        <label>1</label>
        <note>catalytic</note>
    </ligand>
</feature>
<feature type="binding site" evidence="1">
    <location>
        <position position="215"/>
    </location>
    <ligand>
        <name>Mg(2+)</name>
        <dbReference type="ChEBI" id="CHEBI:18420"/>
        <label>1</label>
        <note>catalytic</note>
    </ligand>
</feature>
<feature type="binding site" evidence="1">
    <location>
        <position position="215"/>
    </location>
    <ligand>
        <name>Mg(2+)</name>
        <dbReference type="ChEBI" id="CHEBI:18420"/>
        <label>2</label>
    </ligand>
</feature>
<feature type="binding site" evidence="1">
    <location>
        <position position="217"/>
    </location>
    <ligand>
        <name>Mg(2+)</name>
        <dbReference type="ChEBI" id="CHEBI:18420"/>
        <label>2</label>
    </ligand>
</feature>
<sequence length="441" mass="48917">MVKYIIKALVEVDGPVDEHDIIGAIFGQTEGLLDDFDLRELQEKGRIGRILVKLQRRGNKAVGEIYVPSNLDRVETALVAAMLESVDKVGPYPARISVVEIIDVRAEKIKKIIERAKEILKKWSQEKSVDIREILKEISETTKKSQLIEYGPEKLPAGPGVERSDTIIIVEGRADVLNLLRYGYDNVIALGGATTKVPETIKKLAKEKIAIAFVDGDRGGLMVLKNLLSQADIDYVARAPPGKEVEDLTAREIAKSLSNLIPASKMKEELLKVEKLQKEEVKEVAEKAEKVEAEEVVKKEEVAERGEEMESKAEGAEQPTATALEKAAAKEEVKQEVKTEEEKVKEYVMFIPDSVFEKAKEITGTLRSVLYDSQWNIVAEVPAKDVVSAIEEKGAYAVLHDGVITQRMLDVMSLKGGRLILGRRVARVSKRPKGVFVVLLS</sequence>
<name>DNAG_IGNH4</name>
<proteinExistence type="inferred from homology"/>
<comment type="function">
    <text evidence="1">RNA polymerase that catalyzes the synthesis of short RNA molecules used as primers for DNA polymerase during DNA replication. Also part of the exosome, which is a complex involved in RNA degradation. Acts as a poly(A)-binding protein that enhances the interaction between heteromeric, adenine-rich transcripts and the exosome.</text>
</comment>
<comment type="catalytic activity">
    <reaction evidence="1">
        <text>ssDNA + n NTP = ssDNA/pppN(pN)n-1 hybrid + (n-1) diphosphate.</text>
        <dbReference type="EC" id="2.7.7.101"/>
    </reaction>
</comment>
<comment type="cofactor">
    <cofactor evidence="1">
        <name>Mg(2+)</name>
        <dbReference type="ChEBI" id="CHEBI:18420"/>
    </cofactor>
    <text evidence="1">Binds two Mg(2+) per subunit.</text>
</comment>
<comment type="subunit">
    <text evidence="1">Forms a ternary complex with MCM helicase and DNA. Component of the archaeal exosome complex.</text>
</comment>
<comment type="similarity">
    <text evidence="1">Belongs to the archaeal DnaG primase family.</text>
</comment>
<reference key="1">
    <citation type="journal article" date="2008" name="Genome Biol.">
        <title>A genomic analysis of the archaeal system Ignicoccus hospitalis-Nanoarchaeum equitans.</title>
        <authorList>
            <person name="Podar M."/>
            <person name="Anderson I."/>
            <person name="Makarova K.S."/>
            <person name="Elkins J.G."/>
            <person name="Ivanova N."/>
            <person name="Wall M.A."/>
            <person name="Lykidis A."/>
            <person name="Mavromatis K."/>
            <person name="Sun H."/>
            <person name="Hudson M.E."/>
            <person name="Chen W."/>
            <person name="Deciu C."/>
            <person name="Hutchison D."/>
            <person name="Eads J.R."/>
            <person name="Anderson A."/>
            <person name="Fernandes F."/>
            <person name="Szeto E."/>
            <person name="Lapidus A."/>
            <person name="Kyrpides N.C."/>
            <person name="Saier M.H. Jr."/>
            <person name="Richardson P.M."/>
            <person name="Rachel R."/>
            <person name="Huber H."/>
            <person name="Eisen J.A."/>
            <person name="Koonin E.V."/>
            <person name="Keller M."/>
            <person name="Stetter K.O."/>
        </authorList>
    </citation>
    <scope>NUCLEOTIDE SEQUENCE [LARGE SCALE GENOMIC DNA]</scope>
    <source>
        <strain>KIN4/I / DSM 18386 / JCM 14125</strain>
    </source>
</reference>
<gene>
    <name evidence="1" type="primary">dnaG</name>
    <name type="ordered locus">Igni_0061</name>
</gene>
<evidence type="ECO:0000255" key="1">
    <source>
        <dbReference type="HAMAP-Rule" id="MF_00007"/>
    </source>
</evidence>
<evidence type="ECO:0000256" key="2">
    <source>
        <dbReference type="SAM" id="MobiDB-lite"/>
    </source>
</evidence>
<accession>A8A8J3</accession>
<keyword id="KW-0235">DNA replication</keyword>
<keyword id="KW-0240">DNA-directed RNA polymerase</keyword>
<keyword id="KW-0271">Exosome</keyword>
<keyword id="KW-0460">Magnesium</keyword>
<keyword id="KW-0479">Metal-binding</keyword>
<keyword id="KW-0548">Nucleotidyltransferase</keyword>
<keyword id="KW-0639">Primosome</keyword>
<keyword id="KW-1185">Reference proteome</keyword>
<keyword id="KW-0804">Transcription</keyword>
<keyword id="KW-0808">Transferase</keyword>